<accession>A5GIB4</accession>
<gene>
    <name evidence="1" type="primary">ndhK</name>
    <name type="ordered locus">SynWH7803_0253</name>
</gene>
<proteinExistence type="inferred from homology"/>
<feature type="chain" id="PRO_0000358498" description="NAD(P)H-quinone oxidoreductase subunit K">
    <location>
        <begin position="1"/>
        <end position="248"/>
    </location>
</feature>
<feature type="binding site" evidence="1">
    <location>
        <position position="66"/>
    </location>
    <ligand>
        <name>[4Fe-4S] cluster</name>
        <dbReference type="ChEBI" id="CHEBI:49883"/>
    </ligand>
</feature>
<feature type="binding site" evidence="1">
    <location>
        <position position="67"/>
    </location>
    <ligand>
        <name>[4Fe-4S] cluster</name>
        <dbReference type="ChEBI" id="CHEBI:49883"/>
    </ligand>
</feature>
<feature type="binding site" evidence="1">
    <location>
        <position position="131"/>
    </location>
    <ligand>
        <name>[4Fe-4S] cluster</name>
        <dbReference type="ChEBI" id="CHEBI:49883"/>
    </ligand>
</feature>
<feature type="binding site" evidence="1">
    <location>
        <position position="162"/>
    </location>
    <ligand>
        <name>[4Fe-4S] cluster</name>
        <dbReference type="ChEBI" id="CHEBI:49883"/>
    </ligand>
</feature>
<keyword id="KW-0004">4Fe-4S</keyword>
<keyword id="KW-0408">Iron</keyword>
<keyword id="KW-0411">Iron-sulfur</keyword>
<keyword id="KW-0472">Membrane</keyword>
<keyword id="KW-0479">Metal-binding</keyword>
<keyword id="KW-0520">NAD</keyword>
<keyword id="KW-0521">NADP</keyword>
<keyword id="KW-0618">Plastoquinone</keyword>
<keyword id="KW-0874">Quinone</keyword>
<keyword id="KW-1185">Reference proteome</keyword>
<keyword id="KW-0793">Thylakoid</keyword>
<keyword id="KW-1278">Translocase</keyword>
<keyword id="KW-0813">Transport</keyword>
<sequence length="248" mass="26547">MAGESPSIQALRDLREASCGPVAGAADGAPTVTQDLSENVILTSLDDLHNWARLSSLWPLLYGTACCFIEFAALLGSRFDFDRFGLVPRSSPRQADLLIVAGTVTMKMAPALVRLYEQMPEPKYVIAMGACTITGGMFSADSTTAVRGVDKLIPVDLYMPGCPPRPEAIFDAVIKLRKKVANESVADRRQLQQTHRYCTVAHAMTAVEPIVTGAYLRAETQVAALQPGAGLPMPALETADAVQPSEPS</sequence>
<protein>
    <recommendedName>
        <fullName evidence="1">NAD(P)H-quinone oxidoreductase subunit K</fullName>
        <ecNumber evidence="1">7.1.1.-</ecNumber>
    </recommendedName>
    <alternativeName>
        <fullName evidence="1">NAD(P)H dehydrogenase I subunit K</fullName>
    </alternativeName>
    <alternativeName>
        <fullName evidence="1">NDH-1 subunit K</fullName>
        <shortName evidence="1">NDH-K</shortName>
    </alternativeName>
</protein>
<reference key="1">
    <citation type="submission" date="2006-05" db="EMBL/GenBank/DDBJ databases">
        <authorList>
            <consortium name="Genoscope"/>
        </authorList>
    </citation>
    <scope>NUCLEOTIDE SEQUENCE [LARGE SCALE GENOMIC DNA]</scope>
    <source>
        <strain>WH7803</strain>
    </source>
</reference>
<evidence type="ECO:0000255" key="1">
    <source>
        <dbReference type="HAMAP-Rule" id="MF_01356"/>
    </source>
</evidence>
<name>NDHK_SYNPW</name>
<dbReference type="EC" id="7.1.1.-" evidence="1"/>
<dbReference type="EMBL" id="CT971583">
    <property type="protein sequence ID" value="CAK22679.1"/>
    <property type="molecule type" value="Genomic_DNA"/>
</dbReference>
<dbReference type="SMR" id="A5GIB4"/>
<dbReference type="STRING" id="32051.SynWH7803_0253"/>
<dbReference type="KEGG" id="syx:SynWH7803_0253"/>
<dbReference type="eggNOG" id="COG0377">
    <property type="taxonomic scope" value="Bacteria"/>
</dbReference>
<dbReference type="HOGENOM" id="CLU_055737_2_0_3"/>
<dbReference type="OrthoDB" id="9786737at2"/>
<dbReference type="Proteomes" id="UP000001566">
    <property type="component" value="Chromosome"/>
</dbReference>
<dbReference type="GO" id="GO:0031676">
    <property type="term" value="C:plasma membrane-derived thylakoid membrane"/>
    <property type="evidence" value="ECO:0007669"/>
    <property type="project" value="UniProtKB-SubCell"/>
</dbReference>
<dbReference type="GO" id="GO:0045271">
    <property type="term" value="C:respiratory chain complex I"/>
    <property type="evidence" value="ECO:0007669"/>
    <property type="project" value="TreeGrafter"/>
</dbReference>
<dbReference type="GO" id="GO:0051539">
    <property type="term" value="F:4 iron, 4 sulfur cluster binding"/>
    <property type="evidence" value="ECO:0007669"/>
    <property type="project" value="UniProtKB-KW"/>
</dbReference>
<dbReference type="GO" id="GO:0005506">
    <property type="term" value="F:iron ion binding"/>
    <property type="evidence" value="ECO:0007669"/>
    <property type="project" value="UniProtKB-UniRule"/>
</dbReference>
<dbReference type="GO" id="GO:0008137">
    <property type="term" value="F:NADH dehydrogenase (ubiquinone) activity"/>
    <property type="evidence" value="ECO:0007669"/>
    <property type="project" value="InterPro"/>
</dbReference>
<dbReference type="GO" id="GO:0048038">
    <property type="term" value="F:quinone binding"/>
    <property type="evidence" value="ECO:0007669"/>
    <property type="project" value="UniProtKB-KW"/>
</dbReference>
<dbReference type="GO" id="GO:0009060">
    <property type="term" value="P:aerobic respiration"/>
    <property type="evidence" value="ECO:0007669"/>
    <property type="project" value="TreeGrafter"/>
</dbReference>
<dbReference type="GO" id="GO:0015990">
    <property type="term" value="P:electron transport coupled proton transport"/>
    <property type="evidence" value="ECO:0007669"/>
    <property type="project" value="TreeGrafter"/>
</dbReference>
<dbReference type="GO" id="GO:0019684">
    <property type="term" value="P:photosynthesis, light reaction"/>
    <property type="evidence" value="ECO:0007669"/>
    <property type="project" value="UniProtKB-UniRule"/>
</dbReference>
<dbReference type="FunFam" id="3.40.50.12280:FF:000003">
    <property type="entry name" value="NAD(P)H-quinone oxidoreductase subunit K, chloroplastic"/>
    <property type="match status" value="1"/>
</dbReference>
<dbReference type="Gene3D" id="3.40.50.12280">
    <property type="match status" value="1"/>
</dbReference>
<dbReference type="HAMAP" id="MF_01356">
    <property type="entry name" value="NDH1_NuoB"/>
    <property type="match status" value="1"/>
</dbReference>
<dbReference type="InterPro" id="IPR006137">
    <property type="entry name" value="NADH_UbQ_OxRdtase-like_20kDa"/>
</dbReference>
<dbReference type="InterPro" id="IPR006138">
    <property type="entry name" value="NADH_UQ_OxRdtase_20Kd_su"/>
</dbReference>
<dbReference type="NCBIfam" id="TIGR01957">
    <property type="entry name" value="nuoB_fam"/>
    <property type="match status" value="1"/>
</dbReference>
<dbReference type="NCBIfam" id="NF005012">
    <property type="entry name" value="PRK06411.1"/>
    <property type="match status" value="1"/>
</dbReference>
<dbReference type="PANTHER" id="PTHR11995">
    <property type="entry name" value="NADH DEHYDROGENASE"/>
    <property type="match status" value="1"/>
</dbReference>
<dbReference type="PANTHER" id="PTHR11995:SF14">
    <property type="entry name" value="NADH DEHYDROGENASE [UBIQUINONE] IRON-SULFUR PROTEIN 7, MITOCHONDRIAL"/>
    <property type="match status" value="1"/>
</dbReference>
<dbReference type="Pfam" id="PF01058">
    <property type="entry name" value="Oxidored_q6"/>
    <property type="match status" value="1"/>
</dbReference>
<dbReference type="SUPFAM" id="SSF56770">
    <property type="entry name" value="HydA/Nqo6-like"/>
    <property type="match status" value="1"/>
</dbReference>
<dbReference type="PROSITE" id="PS01150">
    <property type="entry name" value="COMPLEX1_20K"/>
    <property type="match status" value="1"/>
</dbReference>
<comment type="function">
    <text evidence="1">NDH-1 shuttles electrons from an unknown electron donor, via FMN and iron-sulfur (Fe-S) centers, to quinones in the respiratory and/or the photosynthetic chain. The immediate electron acceptor for the enzyme in this species is believed to be plastoquinone. Couples the redox reaction to proton translocation, and thus conserves the redox energy in a proton gradient. Cyanobacterial NDH-1 also plays a role in inorganic carbon-concentration.</text>
</comment>
<comment type="catalytic activity">
    <reaction evidence="1">
        <text>a plastoquinone + NADH + (n+1) H(+)(in) = a plastoquinol + NAD(+) + n H(+)(out)</text>
        <dbReference type="Rhea" id="RHEA:42608"/>
        <dbReference type="Rhea" id="RHEA-COMP:9561"/>
        <dbReference type="Rhea" id="RHEA-COMP:9562"/>
        <dbReference type="ChEBI" id="CHEBI:15378"/>
        <dbReference type="ChEBI" id="CHEBI:17757"/>
        <dbReference type="ChEBI" id="CHEBI:57540"/>
        <dbReference type="ChEBI" id="CHEBI:57945"/>
        <dbReference type="ChEBI" id="CHEBI:62192"/>
    </reaction>
</comment>
<comment type="catalytic activity">
    <reaction evidence="1">
        <text>a plastoquinone + NADPH + (n+1) H(+)(in) = a plastoquinol + NADP(+) + n H(+)(out)</text>
        <dbReference type="Rhea" id="RHEA:42612"/>
        <dbReference type="Rhea" id="RHEA-COMP:9561"/>
        <dbReference type="Rhea" id="RHEA-COMP:9562"/>
        <dbReference type="ChEBI" id="CHEBI:15378"/>
        <dbReference type="ChEBI" id="CHEBI:17757"/>
        <dbReference type="ChEBI" id="CHEBI:57783"/>
        <dbReference type="ChEBI" id="CHEBI:58349"/>
        <dbReference type="ChEBI" id="CHEBI:62192"/>
    </reaction>
</comment>
<comment type="cofactor">
    <cofactor evidence="1">
        <name>[4Fe-4S] cluster</name>
        <dbReference type="ChEBI" id="CHEBI:49883"/>
    </cofactor>
    <text evidence="1">Binds 1 [4Fe-4S] cluster.</text>
</comment>
<comment type="subunit">
    <text evidence="1">NDH-1 can be composed of about 15 different subunits; different subcomplexes with different compositions have been identified which probably have different functions.</text>
</comment>
<comment type="subcellular location">
    <subcellularLocation>
        <location evidence="1">Cellular thylakoid membrane</location>
        <topology evidence="1">Peripheral membrane protein</topology>
        <orientation evidence="1">Cytoplasmic side</orientation>
    </subcellularLocation>
</comment>
<comment type="similarity">
    <text evidence="1">Belongs to the complex I 20 kDa subunit family.</text>
</comment>
<organism>
    <name type="scientific">Synechococcus sp. (strain WH7803)</name>
    <dbReference type="NCBI Taxonomy" id="32051"/>
    <lineage>
        <taxon>Bacteria</taxon>
        <taxon>Bacillati</taxon>
        <taxon>Cyanobacteriota</taxon>
        <taxon>Cyanophyceae</taxon>
        <taxon>Synechococcales</taxon>
        <taxon>Synechococcaceae</taxon>
        <taxon>Synechococcus</taxon>
    </lineage>
</organism>